<gene>
    <name evidence="1" type="primary">rpsD2</name>
    <name type="ordered locus">Ping_3500</name>
</gene>
<keyword id="KW-1185">Reference proteome</keyword>
<keyword id="KW-0687">Ribonucleoprotein</keyword>
<keyword id="KW-0689">Ribosomal protein</keyword>
<keyword id="KW-0694">RNA-binding</keyword>
<keyword id="KW-0699">rRNA-binding</keyword>
<name>RS4B_PSYIN</name>
<comment type="function">
    <text evidence="1">One of the primary rRNA binding proteins, it binds directly to 16S rRNA where it nucleates assembly of the body of the 30S subunit.</text>
</comment>
<comment type="function">
    <text evidence="1">With S5 and S12 plays an important role in translational accuracy.</text>
</comment>
<comment type="subunit">
    <text evidence="1">Part of the 30S ribosomal subunit. Contacts protein S5. The interaction surface between S4 and S5 is involved in control of translational fidelity.</text>
</comment>
<comment type="similarity">
    <text evidence="1">Belongs to the universal ribosomal protein uS4 family.</text>
</comment>
<feature type="chain" id="PRO_0000293345" description="Small ribosomal subunit protein uS4B">
    <location>
        <begin position="1"/>
        <end position="206"/>
    </location>
</feature>
<feature type="domain" description="S4 RNA-binding" evidence="1">
    <location>
        <begin position="96"/>
        <end position="156"/>
    </location>
</feature>
<dbReference type="EMBL" id="CP000510">
    <property type="protein sequence ID" value="ABM05183.1"/>
    <property type="molecule type" value="Genomic_DNA"/>
</dbReference>
<dbReference type="RefSeq" id="WP_011771734.1">
    <property type="nucleotide sequence ID" value="NC_008709.1"/>
</dbReference>
<dbReference type="SMR" id="A1T0B8"/>
<dbReference type="STRING" id="357804.Ping_3500"/>
<dbReference type="KEGG" id="pin:Ping_3500"/>
<dbReference type="eggNOG" id="COG0522">
    <property type="taxonomic scope" value="Bacteria"/>
</dbReference>
<dbReference type="HOGENOM" id="CLU_092403_0_2_6"/>
<dbReference type="OrthoDB" id="9803672at2"/>
<dbReference type="Proteomes" id="UP000000639">
    <property type="component" value="Chromosome"/>
</dbReference>
<dbReference type="GO" id="GO:0015935">
    <property type="term" value="C:small ribosomal subunit"/>
    <property type="evidence" value="ECO:0007669"/>
    <property type="project" value="InterPro"/>
</dbReference>
<dbReference type="GO" id="GO:0019843">
    <property type="term" value="F:rRNA binding"/>
    <property type="evidence" value="ECO:0007669"/>
    <property type="project" value="UniProtKB-UniRule"/>
</dbReference>
<dbReference type="GO" id="GO:0003735">
    <property type="term" value="F:structural constituent of ribosome"/>
    <property type="evidence" value="ECO:0007669"/>
    <property type="project" value="InterPro"/>
</dbReference>
<dbReference type="GO" id="GO:0042274">
    <property type="term" value="P:ribosomal small subunit biogenesis"/>
    <property type="evidence" value="ECO:0007669"/>
    <property type="project" value="TreeGrafter"/>
</dbReference>
<dbReference type="GO" id="GO:0006412">
    <property type="term" value="P:translation"/>
    <property type="evidence" value="ECO:0007669"/>
    <property type="project" value="UniProtKB-UniRule"/>
</dbReference>
<dbReference type="CDD" id="cd00165">
    <property type="entry name" value="S4"/>
    <property type="match status" value="1"/>
</dbReference>
<dbReference type="FunFam" id="1.10.1050.10:FF:000001">
    <property type="entry name" value="30S ribosomal protein S4"/>
    <property type="match status" value="1"/>
</dbReference>
<dbReference type="FunFam" id="3.10.290.10:FF:000001">
    <property type="entry name" value="30S ribosomal protein S4"/>
    <property type="match status" value="1"/>
</dbReference>
<dbReference type="Gene3D" id="1.10.1050.10">
    <property type="entry name" value="Ribosomal Protein S4 Delta 41, Chain A, domain 1"/>
    <property type="match status" value="1"/>
</dbReference>
<dbReference type="Gene3D" id="3.10.290.10">
    <property type="entry name" value="RNA-binding S4 domain"/>
    <property type="match status" value="1"/>
</dbReference>
<dbReference type="HAMAP" id="MF_01306_B">
    <property type="entry name" value="Ribosomal_uS4_B"/>
    <property type="match status" value="1"/>
</dbReference>
<dbReference type="InterPro" id="IPR022801">
    <property type="entry name" value="Ribosomal_uS4"/>
</dbReference>
<dbReference type="InterPro" id="IPR005709">
    <property type="entry name" value="Ribosomal_uS4_bac-type"/>
</dbReference>
<dbReference type="InterPro" id="IPR018079">
    <property type="entry name" value="Ribosomal_uS4_CS"/>
</dbReference>
<dbReference type="InterPro" id="IPR001912">
    <property type="entry name" value="Ribosomal_uS4_N"/>
</dbReference>
<dbReference type="InterPro" id="IPR002942">
    <property type="entry name" value="S4_RNA-bd"/>
</dbReference>
<dbReference type="InterPro" id="IPR036986">
    <property type="entry name" value="S4_RNA-bd_sf"/>
</dbReference>
<dbReference type="NCBIfam" id="NF003717">
    <property type="entry name" value="PRK05327.1"/>
    <property type="match status" value="1"/>
</dbReference>
<dbReference type="NCBIfam" id="TIGR01017">
    <property type="entry name" value="rpsD_bact"/>
    <property type="match status" value="1"/>
</dbReference>
<dbReference type="PANTHER" id="PTHR11831">
    <property type="entry name" value="30S 40S RIBOSOMAL PROTEIN"/>
    <property type="match status" value="1"/>
</dbReference>
<dbReference type="PANTHER" id="PTHR11831:SF4">
    <property type="entry name" value="SMALL RIBOSOMAL SUBUNIT PROTEIN US4M"/>
    <property type="match status" value="1"/>
</dbReference>
<dbReference type="Pfam" id="PF00163">
    <property type="entry name" value="Ribosomal_S4"/>
    <property type="match status" value="1"/>
</dbReference>
<dbReference type="Pfam" id="PF01479">
    <property type="entry name" value="S4"/>
    <property type="match status" value="1"/>
</dbReference>
<dbReference type="SMART" id="SM01390">
    <property type="entry name" value="Ribosomal_S4"/>
    <property type="match status" value="1"/>
</dbReference>
<dbReference type="SMART" id="SM00363">
    <property type="entry name" value="S4"/>
    <property type="match status" value="1"/>
</dbReference>
<dbReference type="SUPFAM" id="SSF55174">
    <property type="entry name" value="Alpha-L RNA-binding motif"/>
    <property type="match status" value="1"/>
</dbReference>
<dbReference type="PROSITE" id="PS00632">
    <property type="entry name" value="RIBOSOMAL_S4"/>
    <property type="match status" value="1"/>
</dbReference>
<dbReference type="PROSITE" id="PS50889">
    <property type="entry name" value="S4"/>
    <property type="match status" value="1"/>
</dbReference>
<accession>A1T0B8</accession>
<reference key="1">
    <citation type="journal article" date="2008" name="BMC Genomics">
        <title>Genomics of an extreme psychrophile, Psychromonas ingrahamii.</title>
        <authorList>
            <person name="Riley M."/>
            <person name="Staley J.T."/>
            <person name="Danchin A."/>
            <person name="Wang T.Z."/>
            <person name="Brettin T.S."/>
            <person name="Hauser L.J."/>
            <person name="Land M.L."/>
            <person name="Thompson L.S."/>
        </authorList>
    </citation>
    <scope>NUCLEOTIDE SEQUENCE [LARGE SCALE GENOMIC DNA]</scope>
    <source>
        <strain>DSM 17664 / CCUG 51855 / 37</strain>
    </source>
</reference>
<evidence type="ECO:0000255" key="1">
    <source>
        <dbReference type="HAMAP-Rule" id="MF_01306"/>
    </source>
</evidence>
<evidence type="ECO:0000305" key="2"/>
<protein>
    <recommendedName>
        <fullName evidence="1">Small ribosomal subunit protein uS4B</fullName>
    </recommendedName>
    <alternativeName>
        <fullName evidence="2">30S ribosomal protein S4 2</fullName>
    </alternativeName>
</protein>
<sequence length="206" mass="23261">MARYLGPKLKLSRREGTDLFLKSGVRAIESKCKIDNAPGVHGARKPRLSDYGLQLREKQKVRRMYGVLEKQFRNYYKESARLQGNTGENLLQLLEGRLDNVVYRMGFGATRAESRQLVSHKAVLVNGKVVNIPSFNVKASDVIAIREKAKKQSRIGAALEIAGQREVPTWVSVDATKMEGIFTRQPERSDLSAEINEQLIIELYSK</sequence>
<organism>
    <name type="scientific">Psychromonas ingrahamii (strain DSM 17664 / CCUG 51855 / 37)</name>
    <dbReference type="NCBI Taxonomy" id="357804"/>
    <lineage>
        <taxon>Bacteria</taxon>
        <taxon>Pseudomonadati</taxon>
        <taxon>Pseudomonadota</taxon>
        <taxon>Gammaproteobacteria</taxon>
        <taxon>Alteromonadales</taxon>
        <taxon>Psychromonadaceae</taxon>
        <taxon>Psychromonas</taxon>
    </lineage>
</organism>
<proteinExistence type="inferred from homology"/>